<protein>
    <recommendedName>
        <fullName>Sterol methyltransferase-like 2</fullName>
        <ecNumber>2.1.1.-</ecNumber>
    </recommendedName>
</protein>
<gene>
    <name type="primary">SMT-2</name>
</gene>
<dbReference type="EC" id="2.1.1.-"/>
<dbReference type="EMBL" id="JN828966">
    <property type="protein sequence ID" value="AEY68260.1"/>
    <property type="molecule type" value="mRNA"/>
</dbReference>
<dbReference type="SMR" id="H2E7T9"/>
<dbReference type="GO" id="GO:0005783">
    <property type="term" value="C:endoplasmic reticulum"/>
    <property type="evidence" value="ECO:0007669"/>
    <property type="project" value="UniProtKB-KW"/>
</dbReference>
<dbReference type="GO" id="GO:0016020">
    <property type="term" value="C:membrane"/>
    <property type="evidence" value="ECO:0007669"/>
    <property type="project" value="UniProtKB-KW"/>
</dbReference>
<dbReference type="GO" id="GO:0008757">
    <property type="term" value="F:S-adenosylmethionine-dependent methyltransferase activity"/>
    <property type="evidence" value="ECO:0007669"/>
    <property type="project" value="InterPro"/>
</dbReference>
<dbReference type="GO" id="GO:0032259">
    <property type="term" value="P:methylation"/>
    <property type="evidence" value="ECO:0007669"/>
    <property type="project" value="UniProtKB-KW"/>
</dbReference>
<dbReference type="GO" id="GO:0006694">
    <property type="term" value="P:steroid biosynthetic process"/>
    <property type="evidence" value="ECO:0007669"/>
    <property type="project" value="InterPro"/>
</dbReference>
<dbReference type="CDD" id="cd02440">
    <property type="entry name" value="AdoMet_MTases"/>
    <property type="match status" value="1"/>
</dbReference>
<dbReference type="Gene3D" id="3.40.50.150">
    <property type="entry name" value="Vaccinia Virus protein VP39"/>
    <property type="match status" value="1"/>
</dbReference>
<dbReference type="InterPro" id="IPR013216">
    <property type="entry name" value="Methyltransf_11"/>
</dbReference>
<dbReference type="InterPro" id="IPR030384">
    <property type="entry name" value="MeTrfase_SMT"/>
</dbReference>
<dbReference type="InterPro" id="IPR029063">
    <property type="entry name" value="SAM-dependent_MTases_sf"/>
</dbReference>
<dbReference type="InterPro" id="IPR013705">
    <property type="entry name" value="Sterol_MeTrfase_C"/>
</dbReference>
<dbReference type="PANTHER" id="PTHR44742">
    <property type="match status" value="1"/>
</dbReference>
<dbReference type="PANTHER" id="PTHR44742:SF2">
    <property type="entry name" value="24-METHYLENESTEROL C-METHYLTRANSFERASE 2"/>
    <property type="match status" value="1"/>
</dbReference>
<dbReference type="Pfam" id="PF08241">
    <property type="entry name" value="Methyltransf_11"/>
    <property type="match status" value="1"/>
</dbReference>
<dbReference type="Pfam" id="PF08498">
    <property type="entry name" value="Sterol_MT_C"/>
    <property type="match status" value="1"/>
</dbReference>
<dbReference type="SUPFAM" id="SSF53335">
    <property type="entry name" value="S-adenosyl-L-methionine-dependent methyltransferases"/>
    <property type="match status" value="1"/>
</dbReference>
<dbReference type="PROSITE" id="PS51685">
    <property type="entry name" value="SAM_MT_ERG6_SMT"/>
    <property type="match status" value="1"/>
</dbReference>
<accession>H2E7T9</accession>
<comment type="function">
    <text evidence="3">Unable to convert squalene, botryococcene, cycloartenol, zymosterol or lanosterol to mono-, di-, tri- or tetramethylated derivatives.</text>
</comment>
<comment type="subcellular location">
    <subcellularLocation>
        <location evidence="4">Microsome membrane</location>
        <topology evidence="4">Single-pass membrane protein</topology>
    </subcellularLocation>
</comment>
<comment type="similarity">
    <text evidence="2">Belongs to the class I-like SAM-binding methyltransferase superfamily. Erg6/SMT family.</text>
</comment>
<name>SMTL2_BOTBR</name>
<proteinExistence type="evidence at transcript level"/>
<feature type="chain" id="PRO_0000421359" description="Sterol methyltransferase-like 2">
    <location>
        <begin position="1"/>
        <end position="389"/>
    </location>
</feature>
<feature type="transmembrane region" description="Helical" evidence="1">
    <location>
        <begin position="25"/>
        <end position="45"/>
    </location>
</feature>
<reference key="1">
    <citation type="journal article" date="2012" name="J. Biol. Chem.">
        <title>Functional identification of triterpene methyltransferases from Botryococcus braunii race B.</title>
        <authorList>
            <person name="Niehaus T.D."/>
            <person name="Kinison S."/>
            <person name="Okada S."/>
            <person name="Yeo Y.S."/>
            <person name="Bell S.A."/>
            <person name="Cui P."/>
            <person name="Devarenne T.P."/>
            <person name="Chappell J."/>
        </authorList>
    </citation>
    <scope>NUCLEOTIDE SEQUENCE [MRNA]</scope>
    <scope>FUNCTION</scope>
</reference>
<keyword id="KW-0256">Endoplasmic reticulum</keyword>
<keyword id="KW-0444">Lipid biosynthesis</keyword>
<keyword id="KW-0443">Lipid metabolism</keyword>
<keyword id="KW-0472">Membrane</keyword>
<keyword id="KW-0489">Methyltransferase</keyword>
<keyword id="KW-0492">Microsome</keyword>
<keyword id="KW-0949">S-adenosyl-L-methionine</keyword>
<keyword id="KW-0808">Transferase</keyword>
<keyword id="KW-0812">Transmembrane</keyword>
<keyword id="KW-1133">Transmembrane helix</keyword>
<evidence type="ECO:0000255" key="1"/>
<evidence type="ECO:0000255" key="2">
    <source>
        <dbReference type="PROSITE-ProRule" id="PRU01022"/>
    </source>
</evidence>
<evidence type="ECO:0000269" key="3">
    <source>
    </source>
</evidence>
<evidence type="ECO:0000305" key="4"/>
<organism>
    <name type="scientific">Botryococcus braunii</name>
    <name type="common">Green alga</name>
    <dbReference type="NCBI Taxonomy" id="38881"/>
    <lineage>
        <taxon>Eukaryota</taxon>
        <taxon>Viridiplantae</taxon>
        <taxon>Chlorophyta</taxon>
        <taxon>core chlorophytes</taxon>
        <taxon>Trebouxiophyceae</taxon>
        <taxon>Trebouxiophyceae incertae sedis</taxon>
        <taxon>Elliptochloris clade</taxon>
        <taxon>Botryococcus</taxon>
    </lineage>
</organism>
<sequence>MAAELIKEYVPIVSEYAPGLIEGLLSWKGAVGLVAATGIGYVLIIQRLQNTSATKNLWGLTGGGVQAKDVSKVADVYDKSYGKEGDGSLTLHHLDKKESVAVVDTFYNLVTDGYEACWDTSFHFSPRPRFTNFRTAQILHEARIGYMARIQPGFKVLDCGCGIGNPGRTVAALTGAHVTGITINEYQVKRALYHTKKAGLTGLFTPVQGDFTDMPFADKTFDAAFAIEATCHAPKLEQVYGEIFRVLKPGAFFAVYEAVTTDKFDPANKRHVEIINSLVYGNGIPDMRTWKQAEEAGKNVGFKLCCAFDAGAASPVALPWWERVKDMINWGVVKYTKAACLALDSLRLLPKDYWKVANMVGDSLPDLVESGETGIFTPMYLLVWQKPEE</sequence>